<protein>
    <recommendedName>
        <fullName evidence="1">Putative N-acetylmannosamine-6-phosphate 2-epimerase</fullName>
        <ecNumber evidence="1">5.1.3.9</ecNumber>
    </recommendedName>
    <alternativeName>
        <fullName evidence="1">ManNAc-6-P epimerase</fullName>
    </alternativeName>
</protein>
<reference key="1">
    <citation type="journal article" date="2007" name="J. Bacteriol.">
        <title>Genome-wide transcriptional changes in Streptococcus gordonii in response to competence signaling peptide.</title>
        <authorList>
            <person name="Vickerman M.M."/>
            <person name="Iobst S."/>
            <person name="Jesionowski A.M."/>
            <person name="Gill S.R."/>
        </authorList>
    </citation>
    <scope>NUCLEOTIDE SEQUENCE [LARGE SCALE GENOMIC DNA]</scope>
    <source>
        <strain>Challis / ATCC 35105 / BCRC 15272 / CH1 / DL1 / V288</strain>
    </source>
</reference>
<comment type="function">
    <text evidence="1">Converts N-acetylmannosamine-6-phosphate (ManNAc-6-P) to N-acetylglucosamine-6-phosphate (GlcNAc-6-P).</text>
</comment>
<comment type="catalytic activity">
    <reaction evidence="1">
        <text>an N-acyl-D-glucosamine 6-phosphate = an N-acyl-D-mannosamine 6-phosphate</text>
        <dbReference type="Rhea" id="RHEA:23932"/>
        <dbReference type="ChEBI" id="CHEBI:57599"/>
        <dbReference type="ChEBI" id="CHEBI:57666"/>
        <dbReference type="EC" id="5.1.3.9"/>
    </reaction>
</comment>
<comment type="pathway">
    <text evidence="1">Amino-sugar metabolism; N-acetylneuraminate degradation; D-fructose 6-phosphate from N-acetylneuraminate: step 3/5.</text>
</comment>
<comment type="similarity">
    <text evidence="1">Belongs to the NanE family.</text>
</comment>
<keyword id="KW-0119">Carbohydrate metabolism</keyword>
<keyword id="KW-0413">Isomerase</keyword>
<keyword id="KW-1185">Reference proteome</keyword>
<dbReference type="EC" id="5.1.3.9" evidence="1"/>
<dbReference type="EMBL" id="CP000725">
    <property type="protein sequence ID" value="ABV11084.1"/>
    <property type="molecule type" value="Genomic_DNA"/>
</dbReference>
<dbReference type="RefSeq" id="WP_011999666.1">
    <property type="nucleotide sequence ID" value="NC_009785.1"/>
</dbReference>
<dbReference type="SMR" id="A8AUI0"/>
<dbReference type="STRING" id="467705.SGO_0118"/>
<dbReference type="KEGG" id="sgo:SGO_0118"/>
<dbReference type="eggNOG" id="COG3010">
    <property type="taxonomic scope" value="Bacteria"/>
</dbReference>
<dbReference type="HOGENOM" id="CLU_086300_1_0_9"/>
<dbReference type="UniPathway" id="UPA00629">
    <property type="reaction ID" value="UER00682"/>
</dbReference>
<dbReference type="Proteomes" id="UP000001131">
    <property type="component" value="Chromosome"/>
</dbReference>
<dbReference type="GO" id="GO:0005829">
    <property type="term" value="C:cytosol"/>
    <property type="evidence" value="ECO:0007669"/>
    <property type="project" value="TreeGrafter"/>
</dbReference>
<dbReference type="GO" id="GO:0047465">
    <property type="term" value="F:N-acylglucosamine-6-phosphate 2-epimerase activity"/>
    <property type="evidence" value="ECO:0007669"/>
    <property type="project" value="UniProtKB-EC"/>
</dbReference>
<dbReference type="GO" id="GO:0005975">
    <property type="term" value="P:carbohydrate metabolic process"/>
    <property type="evidence" value="ECO:0007669"/>
    <property type="project" value="UniProtKB-UniRule"/>
</dbReference>
<dbReference type="GO" id="GO:0006053">
    <property type="term" value="P:N-acetylmannosamine catabolic process"/>
    <property type="evidence" value="ECO:0007669"/>
    <property type="project" value="TreeGrafter"/>
</dbReference>
<dbReference type="GO" id="GO:0019262">
    <property type="term" value="P:N-acetylneuraminate catabolic process"/>
    <property type="evidence" value="ECO:0007669"/>
    <property type="project" value="UniProtKB-UniRule"/>
</dbReference>
<dbReference type="CDD" id="cd04729">
    <property type="entry name" value="NanE"/>
    <property type="match status" value="1"/>
</dbReference>
<dbReference type="FunFam" id="3.20.20.70:FF:000035">
    <property type="entry name" value="Putative N-acetylmannosamine-6-phosphate 2-epimerase"/>
    <property type="match status" value="1"/>
</dbReference>
<dbReference type="Gene3D" id="3.20.20.70">
    <property type="entry name" value="Aldolase class I"/>
    <property type="match status" value="1"/>
</dbReference>
<dbReference type="HAMAP" id="MF_01235">
    <property type="entry name" value="ManNAc6P_epimer"/>
    <property type="match status" value="1"/>
</dbReference>
<dbReference type="InterPro" id="IPR013785">
    <property type="entry name" value="Aldolase_TIM"/>
</dbReference>
<dbReference type="InterPro" id="IPR007260">
    <property type="entry name" value="NanE"/>
</dbReference>
<dbReference type="InterPro" id="IPR011060">
    <property type="entry name" value="RibuloseP-bd_barrel"/>
</dbReference>
<dbReference type="NCBIfam" id="NF002231">
    <property type="entry name" value="PRK01130.1"/>
    <property type="match status" value="1"/>
</dbReference>
<dbReference type="PANTHER" id="PTHR36204">
    <property type="entry name" value="N-ACETYLMANNOSAMINE-6-PHOSPHATE 2-EPIMERASE-RELATED"/>
    <property type="match status" value="1"/>
</dbReference>
<dbReference type="PANTHER" id="PTHR36204:SF1">
    <property type="entry name" value="N-ACETYLMANNOSAMINE-6-PHOSPHATE 2-EPIMERASE-RELATED"/>
    <property type="match status" value="1"/>
</dbReference>
<dbReference type="Pfam" id="PF04131">
    <property type="entry name" value="NanE"/>
    <property type="match status" value="1"/>
</dbReference>
<dbReference type="SUPFAM" id="SSF51366">
    <property type="entry name" value="Ribulose-phoshate binding barrel"/>
    <property type="match status" value="1"/>
</dbReference>
<feature type="chain" id="PRO_1000085733" description="Putative N-acetylmannosamine-6-phosphate 2-epimerase">
    <location>
        <begin position="1"/>
        <end position="233"/>
    </location>
</feature>
<accession>A8AUI0</accession>
<evidence type="ECO:0000255" key="1">
    <source>
        <dbReference type="HAMAP-Rule" id="MF_01235"/>
    </source>
</evidence>
<organism>
    <name type="scientific">Streptococcus gordonii (strain Challis / ATCC 35105 / BCRC 15272 / CH1 / DL1 / V288)</name>
    <dbReference type="NCBI Taxonomy" id="467705"/>
    <lineage>
        <taxon>Bacteria</taxon>
        <taxon>Bacillati</taxon>
        <taxon>Bacillota</taxon>
        <taxon>Bacilli</taxon>
        <taxon>Lactobacillales</taxon>
        <taxon>Streptococcaceae</taxon>
        <taxon>Streptococcus</taxon>
    </lineage>
</organism>
<proteinExistence type="inferred from homology"/>
<sequence length="233" mass="25358">MAQISKEALIEQIRDGIIVSCQALPHEPLYAEKGGVIPLLVKAAEQGGAIGIRANSVRDIKEIKEVTSLPIIGIIKRDYPPQEPFITATMKEVDELAELDIEVIAMDCTKRDRFDGLTIEDFIKEVKKKYPKQLLMADISTLEEGVDAAEAGVDFVGTTLSGYTSYSPKVDGPDFELIKNLCNAGLDVIAEGKIHYPADAKVIHDLGVRGIVVGGAITRPKEITERFVAAVKK</sequence>
<gene>
    <name evidence="1" type="primary">nanE</name>
    <name type="ordered locus">SGO_0118</name>
</gene>
<name>NANE_STRGC</name>